<protein>
    <recommendedName>
        <fullName>Protein Mdm4</fullName>
    </recommendedName>
    <alternativeName>
        <fullName>Double minute 4 protein</fullName>
    </alternativeName>
    <alternativeName>
        <fullName>Mdm2-like p53-binding protein</fullName>
    </alternativeName>
    <alternativeName>
        <fullName>Protein Mdmx</fullName>
    </alternativeName>
    <alternativeName>
        <fullName>p53-binding protein Mdm4</fullName>
    </alternativeName>
</protein>
<proteinExistence type="evidence at protein level"/>
<evidence type="ECO:0000250" key="1"/>
<evidence type="ECO:0000255" key="2"/>
<evidence type="ECO:0000255" key="3">
    <source>
        <dbReference type="PROSITE-ProRule" id="PRU00322"/>
    </source>
</evidence>
<evidence type="ECO:0000255" key="4">
    <source>
        <dbReference type="PROSITE-ProRule" id="PRU01273"/>
    </source>
</evidence>
<evidence type="ECO:0000256" key="5">
    <source>
        <dbReference type="SAM" id="MobiDB-lite"/>
    </source>
</evidence>
<evidence type="ECO:0000269" key="6">
    <source>
    </source>
</evidence>
<evidence type="ECO:0000303" key="7">
    <source ref="1"/>
</evidence>
<evidence type="ECO:0000305" key="8"/>
<evidence type="ECO:0007829" key="9">
    <source>
        <dbReference type="PDB" id="4N5T"/>
    </source>
</evidence>
<evidence type="ECO:0007829" key="10">
    <source>
        <dbReference type="PDB" id="6V4G"/>
    </source>
</evidence>
<reference key="1">
    <citation type="submission" date="2005-06" db="EMBL/GenBank/DDBJ databases">
        <authorList>
            <consortium name="NIH - Zebrafish Gene Collection (ZGC) project"/>
        </authorList>
    </citation>
    <scope>NUCLEOTIDE SEQUENCE [LARGE SCALE MRNA] (ISOFORMS 1 AND 2)</scope>
    <source>
        <strain>AB</strain>
    </source>
</reference>
<reference key="2">
    <citation type="journal article" date="2007" name="Cell Cycle">
        <title>Molecular basis for the inhibition of p53 by Mdmx.</title>
        <authorList>
            <person name="Popowicz G.M."/>
            <person name="Czarna A."/>
            <person name="Rothweiler U."/>
            <person name="Szwagierczak A."/>
            <person name="Krajewski M."/>
            <person name="Weber L."/>
            <person name="Holak T.A."/>
        </authorList>
    </citation>
    <scope>X-RAY CRYSTALLOGRAPHY (2.3 ANGSTROMS) OF 15-140 IN COMPLEX WITH P53</scope>
</reference>
<keyword id="KW-0002">3D-structure</keyword>
<keyword id="KW-0025">Alternative splicing</keyword>
<keyword id="KW-0479">Metal-binding</keyword>
<keyword id="KW-0539">Nucleus</keyword>
<keyword id="KW-1185">Reference proteome</keyword>
<keyword id="KW-0862">Zinc</keyword>
<keyword id="KW-0863">Zinc-finger</keyword>
<feature type="chain" id="PRO_0000331517" description="Protein Mdm4">
    <location>
        <begin position="1"/>
        <end position="496"/>
    </location>
</feature>
<feature type="domain" description="SWIB/MDM2" evidence="4">
    <location>
        <begin position="22"/>
        <end position="105"/>
    </location>
</feature>
<feature type="zinc finger region" description="RanBP2-type" evidence="3">
    <location>
        <begin position="305"/>
        <end position="334"/>
    </location>
</feature>
<feature type="zinc finger region" description="RING-type; degenerate">
    <location>
        <begin position="443"/>
        <end position="484"/>
    </location>
</feature>
<feature type="region of interest" description="Disordered" evidence="5">
    <location>
        <begin position="1"/>
        <end position="21"/>
    </location>
</feature>
<feature type="region of interest" description="Disordered" evidence="5">
    <location>
        <begin position="115"/>
        <end position="177"/>
    </location>
</feature>
<feature type="region of interest" description="Disordered" evidence="5">
    <location>
        <begin position="210"/>
        <end position="229"/>
    </location>
</feature>
<feature type="region of interest" description="Disordered" evidence="5">
    <location>
        <begin position="259"/>
        <end position="302"/>
    </location>
</feature>
<feature type="region of interest" description="Disordered" evidence="5">
    <location>
        <begin position="350"/>
        <end position="428"/>
    </location>
</feature>
<feature type="short sequence motif" description="Nuclear localization signal" evidence="2">
    <location>
        <begin position="448"/>
        <end position="451"/>
    </location>
</feature>
<feature type="compositionally biased region" description="Polar residues" evidence="5">
    <location>
        <begin position="1"/>
        <end position="11"/>
    </location>
</feature>
<feature type="compositionally biased region" description="Polar residues" evidence="5">
    <location>
        <begin position="131"/>
        <end position="141"/>
    </location>
</feature>
<feature type="compositionally biased region" description="Low complexity" evidence="5">
    <location>
        <begin position="146"/>
        <end position="158"/>
    </location>
</feature>
<feature type="compositionally biased region" description="Polar residues" evidence="5">
    <location>
        <begin position="210"/>
        <end position="223"/>
    </location>
</feature>
<feature type="compositionally biased region" description="Basic and acidic residues" evidence="5">
    <location>
        <begin position="275"/>
        <end position="286"/>
    </location>
</feature>
<feature type="compositionally biased region" description="Acidic residues" evidence="5">
    <location>
        <begin position="287"/>
        <end position="301"/>
    </location>
</feature>
<feature type="compositionally biased region" description="Acidic residues" evidence="5">
    <location>
        <begin position="361"/>
        <end position="373"/>
    </location>
</feature>
<feature type="compositionally biased region" description="Low complexity" evidence="5">
    <location>
        <begin position="397"/>
        <end position="410"/>
    </location>
</feature>
<feature type="splice variant" id="VSP_033237" description="In isoform 2." evidence="7">
    <location>
        <begin position="220"/>
        <end position="224"/>
    </location>
</feature>
<feature type="sequence conflict" description="In Ref. 1; AAH47801." evidence="8" ref="1">
    <original>I</original>
    <variation>M</variation>
    <location>
        <position position="254"/>
    </location>
</feature>
<feature type="sequence conflict" description="In Ref. 1; AAH47801." evidence="8" ref="1">
    <original>E</original>
    <variation>G</variation>
    <location>
        <position position="270"/>
    </location>
</feature>
<feature type="sequence conflict" description="In Ref. 1; AAH47801." evidence="8" ref="1">
    <original>L</original>
    <variation>P</variation>
    <location>
        <position position="342"/>
    </location>
</feature>
<feature type="sequence conflict" description="In Ref. 1; AAH47801." evidence="8" ref="1">
    <original>F</original>
    <variation>L</variation>
    <location>
        <position position="416"/>
    </location>
</feature>
<feature type="strand" evidence="10">
    <location>
        <begin position="23"/>
        <end position="26"/>
    </location>
</feature>
<feature type="helix" evidence="10">
    <location>
        <begin position="28"/>
        <end position="36"/>
    </location>
</feature>
<feature type="strand" evidence="9">
    <location>
        <begin position="42"/>
        <end position="45"/>
    </location>
</feature>
<feature type="helix" evidence="10">
    <location>
        <begin position="46"/>
        <end position="60"/>
    </location>
</feature>
<feature type="strand" evidence="10">
    <location>
        <begin position="65"/>
        <end position="67"/>
    </location>
</feature>
<feature type="strand" evidence="10">
    <location>
        <begin position="70"/>
        <end position="72"/>
    </location>
</feature>
<feature type="helix" evidence="10">
    <location>
        <begin position="77"/>
        <end position="82"/>
    </location>
</feature>
<feature type="strand" evidence="10">
    <location>
        <begin position="84"/>
        <end position="88"/>
    </location>
</feature>
<feature type="helix" evidence="10">
    <location>
        <begin position="93"/>
        <end position="102"/>
    </location>
</feature>
<feature type="strand" evidence="10">
    <location>
        <begin position="103"/>
        <end position="105"/>
    </location>
</feature>
<accession>Q7ZUW7</accession>
<accession>Q4V944</accession>
<gene>
    <name type="primary">mdm4</name>
    <name type="synonym">mdmx</name>
</gene>
<sequence>MTSLASSSQLPGSCRTLPGEGTQVHPRAPLLQILKVAGAQEEVFTLKEVMHYLGQYIMMKQLYDKQRQHIVHCHDDPLGELLEVGSFSVKNPSPVYEMLKRNLVILNNSDAAKNLSVGKDSNESPSEDPGQVSSGSINSAQPLIAGSSSTGTTQSCSQRRPRDPDEDSSDGLPRSACKRPKLDVTLEEWDLSGLPWWFLGNLRSNYTRRSNGSTDIHTNQLSPGQDEDTAIVSDTTDDLWFLNEAESEQVSVEIKEAVLEQGSDGESPHEDEDTGKDSKDDGKMQEEQEEDSQCLSDDTDTEISTQDAWQCSECRKFNTPLQRYCMRCWALRKDWYKDCPRLVHSISVPDIPACSSRPERDEDEEEEDDDGIDMPDCLRTVSDPVVLPSHRVSRNIPSSSASSSKGKGPSQIHHHFQETSEGDSQDTLDMETEYQPEALLEPCKLCRVRPRNGNIIHGRTAHLITCFPCARKLHKFHAPCPGCGQVIQKVIKTFIA</sequence>
<organism>
    <name type="scientific">Danio rerio</name>
    <name type="common">Zebrafish</name>
    <name type="synonym">Brachydanio rerio</name>
    <dbReference type="NCBI Taxonomy" id="7955"/>
    <lineage>
        <taxon>Eukaryota</taxon>
        <taxon>Metazoa</taxon>
        <taxon>Chordata</taxon>
        <taxon>Craniata</taxon>
        <taxon>Vertebrata</taxon>
        <taxon>Euteleostomi</taxon>
        <taxon>Actinopterygii</taxon>
        <taxon>Neopterygii</taxon>
        <taxon>Teleostei</taxon>
        <taxon>Ostariophysi</taxon>
        <taxon>Cypriniformes</taxon>
        <taxon>Danionidae</taxon>
        <taxon>Danioninae</taxon>
        <taxon>Danio</taxon>
    </lineage>
</organism>
<comment type="function">
    <text evidence="1">Inhibits p53- and p73-mediated cell cycle arrest and apoptosis by binding its transcriptional activation domain.</text>
</comment>
<comment type="subunit">
    <text evidence="1 6">Binds to p73 (By similarity). Interacts directly with p53.</text>
</comment>
<comment type="subcellular location">
    <subcellularLocation>
        <location evidence="1">Nucleus</location>
    </subcellularLocation>
</comment>
<comment type="alternative products">
    <event type="alternative splicing"/>
    <isoform>
        <id>Q7ZUW7-1</id>
        <name>1</name>
        <sequence type="displayed"/>
    </isoform>
    <isoform>
        <id>Q7ZUW7-2</id>
        <name>2</name>
        <sequence type="described" ref="VSP_033237"/>
    </isoform>
</comment>
<comment type="similarity">
    <text evidence="8">Belongs to the MDM2/MDM4 family.</text>
</comment>
<dbReference type="EMBL" id="BC047801">
    <property type="protein sequence ID" value="AAH47801.1"/>
    <property type="molecule type" value="mRNA"/>
</dbReference>
<dbReference type="EMBL" id="BC097069">
    <property type="protein sequence ID" value="AAH97069.1"/>
    <property type="molecule type" value="mRNA"/>
</dbReference>
<dbReference type="PDB" id="2Z5S">
    <property type="method" value="X-ray"/>
    <property type="resolution" value="2.30 A"/>
    <property type="chains" value="M/N/O=15-140"/>
</dbReference>
<dbReference type="PDB" id="2Z5T">
    <property type="method" value="X-ray"/>
    <property type="resolution" value="2.30 A"/>
    <property type="chains" value="M/N/O=15-140"/>
</dbReference>
<dbReference type="PDB" id="3DAC">
    <property type="method" value="X-ray"/>
    <property type="resolution" value="1.80 A"/>
    <property type="chains" value="A/M=15-129"/>
</dbReference>
<dbReference type="PDB" id="4N5T">
    <property type="method" value="X-ray"/>
    <property type="resolution" value="1.70 A"/>
    <property type="chains" value="A=17-106"/>
</dbReference>
<dbReference type="PDB" id="6V4E">
    <property type="method" value="X-ray"/>
    <property type="resolution" value="1.62 A"/>
    <property type="chains" value="A/B=15-106"/>
</dbReference>
<dbReference type="PDB" id="6V4F">
    <property type="method" value="X-ray"/>
    <property type="resolution" value="1.35 A"/>
    <property type="chains" value="A=15-106"/>
</dbReference>
<dbReference type="PDB" id="6V4G">
    <property type="method" value="X-ray"/>
    <property type="resolution" value="1.25 A"/>
    <property type="chains" value="A=15-106"/>
</dbReference>
<dbReference type="PDB" id="6V4H">
    <property type="method" value="X-ray"/>
    <property type="resolution" value="1.53 A"/>
    <property type="chains" value="A/C=15-106"/>
</dbReference>
<dbReference type="PDB" id="8EBK">
    <property type="method" value="X-ray"/>
    <property type="resolution" value="1.29 A"/>
    <property type="chains" value="A=2-113"/>
</dbReference>
<dbReference type="PDB" id="8GJS">
    <property type="method" value="X-ray"/>
    <property type="resolution" value="1.75 A"/>
    <property type="chains" value="A=17-106"/>
</dbReference>
<dbReference type="PDBsum" id="2Z5S"/>
<dbReference type="PDBsum" id="2Z5T"/>
<dbReference type="PDBsum" id="3DAC"/>
<dbReference type="PDBsum" id="4N5T"/>
<dbReference type="PDBsum" id="6V4E"/>
<dbReference type="PDBsum" id="6V4F"/>
<dbReference type="PDBsum" id="6V4G"/>
<dbReference type="PDBsum" id="6V4H"/>
<dbReference type="PDBsum" id="8EBK"/>
<dbReference type="PDBsum" id="8GJS"/>
<dbReference type="SMR" id="Q7ZUW7"/>
<dbReference type="BioGRID" id="85461">
    <property type="interactions" value="1"/>
</dbReference>
<dbReference type="FunCoup" id="Q7ZUW7">
    <property type="interactions" value="1183"/>
</dbReference>
<dbReference type="STRING" id="7955.ENSDARP00000074651"/>
<dbReference type="PaxDb" id="7955-ENSDARP00000074651"/>
<dbReference type="AGR" id="ZFIN:ZDB-GENE-030131-6872"/>
<dbReference type="ZFIN" id="ZDB-GENE-030131-6872">
    <property type="gene designation" value="mdm4"/>
</dbReference>
<dbReference type="eggNOG" id="ENOG502QQNV">
    <property type="taxonomic scope" value="Eukaryota"/>
</dbReference>
<dbReference type="InParanoid" id="Q7ZUW7"/>
<dbReference type="PhylomeDB" id="Q7ZUW7"/>
<dbReference type="Reactome" id="R-DRE-2559580">
    <property type="pathway name" value="Oxidative Stress Induced Senescence"/>
</dbReference>
<dbReference type="Reactome" id="R-DRE-2559585">
    <property type="pathway name" value="Oncogene Induced Senescence"/>
</dbReference>
<dbReference type="Reactome" id="R-DRE-6804757">
    <property type="pathway name" value="Regulation of TP53 Degradation"/>
</dbReference>
<dbReference type="Reactome" id="R-DRE-69541">
    <property type="pathway name" value="Stabilization of p53"/>
</dbReference>
<dbReference type="EvolutionaryTrace" id="Q7ZUW7"/>
<dbReference type="PRO" id="PR:Q7ZUW7"/>
<dbReference type="Proteomes" id="UP000000437">
    <property type="component" value="Unplaced"/>
</dbReference>
<dbReference type="GO" id="GO:0005634">
    <property type="term" value="C:nucleus"/>
    <property type="evidence" value="ECO:0007669"/>
    <property type="project" value="UniProtKB-SubCell"/>
</dbReference>
<dbReference type="GO" id="GO:0004842">
    <property type="term" value="F:ubiquitin-protein transferase activity"/>
    <property type="evidence" value="ECO:0000318"/>
    <property type="project" value="GO_Central"/>
</dbReference>
<dbReference type="GO" id="GO:0008270">
    <property type="term" value="F:zinc ion binding"/>
    <property type="evidence" value="ECO:0007669"/>
    <property type="project" value="UniProtKB-KW"/>
</dbReference>
<dbReference type="GO" id="GO:0043066">
    <property type="term" value="P:negative regulation of apoptotic process"/>
    <property type="evidence" value="ECO:0007669"/>
    <property type="project" value="InterPro"/>
</dbReference>
<dbReference type="GO" id="GO:0016567">
    <property type="term" value="P:protein ubiquitination"/>
    <property type="evidence" value="ECO:0000318"/>
    <property type="project" value="GO_Central"/>
</dbReference>
<dbReference type="GO" id="GO:0051726">
    <property type="term" value="P:regulation of cell cycle"/>
    <property type="evidence" value="ECO:0007669"/>
    <property type="project" value="InterPro"/>
</dbReference>
<dbReference type="CDD" id="cd17673">
    <property type="entry name" value="MDM4"/>
    <property type="match status" value="1"/>
</dbReference>
<dbReference type="CDD" id="cd16784">
    <property type="entry name" value="mRING-HC-C2H2C4_MDM4"/>
    <property type="match status" value="1"/>
</dbReference>
<dbReference type="Gene3D" id="1.10.245.10">
    <property type="entry name" value="SWIB/MDM2 domain"/>
    <property type="match status" value="1"/>
</dbReference>
<dbReference type="Gene3D" id="3.30.40.10">
    <property type="entry name" value="Zinc/RING finger domain, C3HC4 (zinc finger)"/>
    <property type="match status" value="1"/>
</dbReference>
<dbReference type="Gene3D" id="2.30.30.380">
    <property type="entry name" value="Zn-finger domain of Sec23/24"/>
    <property type="match status" value="1"/>
</dbReference>
<dbReference type="IDEAL" id="IID50094"/>
<dbReference type="InterPro" id="IPR051652">
    <property type="entry name" value="MDM2_MDM4_MUL1"/>
</dbReference>
<dbReference type="InterPro" id="IPR015458">
    <property type="entry name" value="MDM4"/>
</dbReference>
<dbReference type="InterPro" id="IPR016495">
    <property type="entry name" value="p53_neg-reg_MDM_2/4"/>
</dbReference>
<dbReference type="InterPro" id="IPR036885">
    <property type="entry name" value="SWIB_MDM2_dom_sf"/>
</dbReference>
<dbReference type="InterPro" id="IPR003121">
    <property type="entry name" value="SWIB_MDM2_domain"/>
</dbReference>
<dbReference type="InterPro" id="IPR001876">
    <property type="entry name" value="Znf_RanBP2"/>
</dbReference>
<dbReference type="InterPro" id="IPR036443">
    <property type="entry name" value="Znf_RanBP2_sf"/>
</dbReference>
<dbReference type="InterPro" id="IPR013083">
    <property type="entry name" value="Znf_RING/FYVE/PHD"/>
</dbReference>
<dbReference type="PANTHER" id="PTHR12183">
    <property type="entry name" value="MITOCHONDRIAL UBIQUITIN LIGASE ACTIVATOR OF NFKB 1"/>
    <property type="match status" value="1"/>
</dbReference>
<dbReference type="PANTHER" id="PTHR12183:SF37">
    <property type="entry name" value="PROTEIN MDM4"/>
    <property type="match status" value="1"/>
</dbReference>
<dbReference type="Pfam" id="PF02201">
    <property type="entry name" value="SWIB"/>
    <property type="match status" value="1"/>
</dbReference>
<dbReference type="Pfam" id="PF13920">
    <property type="entry name" value="zf-C3HC4_3"/>
    <property type="match status" value="1"/>
</dbReference>
<dbReference type="PIRSF" id="PIRSF500699">
    <property type="entry name" value="MDM4"/>
    <property type="match status" value="1"/>
</dbReference>
<dbReference type="PIRSF" id="PIRSF006748">
    <property type="entry name" value="p53_MDM_2/4"/>
    <property type="match status" value="1"/>
</dbReference>
<dbReference type="SUPFAM" id="SSF90209">
    <property type="entry name" value="Ran binding protein zinc finger-like"/>
    <property type="match status" value="1"/>
</dbReference>
<dbReference type="SUPFAM" id="SSF47592">
    <property type="entry name" value="SWIB/MDM2 domain"/>
    <property type="match status" value="1"/>
</dbReference>
<dbReference type="PROSITE" id="PS51925">
    <property type="entry name" value="SWIB_MDM2"/>
    <property type="match status" value="1"/>
</dbReference>
<dbReference type="PROSITE" id="PS01358">
    <property type="entry name" value="ZF_RANBP2_1"/>
    <property type="match status" value="1"/>
</dbReference>
<dbReference type="PROSITE" id="PS50199">
    <property type="entry name" value="ZF_RANBP2_2"/>
    <property type="match status" value="1"/>
</dbReference>
<name>MDM4_DANRE</name>